<gene>
    <name evidence="3" type="primary">leuA</name>
    <name evidence="4" type="synonym">leu1</name>
</gene>
<reference key="1">
    <citation type="submission" date="1996-05" db="EMBL/GenBank/DDBJ databases">
        <authorList>
            <person name="Adams P.S."/>
            <person name="Dolejsi M.K."/>
            <person name="Hardin S."/>
            <person name="Nanthakumar B."/>
            <person name="Riethman H."/>
            <person name="Rush J."/>
            <person name="Morrison P.T."/>
        </authorList>
    </citation>
    <scope>NUCLEOTIDE SEQUENCE [MRNA]</scope>
</reference>
<keyword id="KW-0028">Amino-acid biosynthesis</keyword>
<keyword id="KW-0100">Branched-chain amino acid biosynthesis</keyword>
<keyword id="KW-0963">Cytoplasm</keyword>
<keyword id="KW-0432">Leucine biosynthesis</keyword>
<keyword id="KW-0464">Manganese</keyword>
<keyword id="KW-0479">Metal-binding</keyword>
<keyword id="KW-0808">Transferase</keyword>
<feature type="chain" id="PRO_0000140392" description="2-isopropylmalate synthase">
    <location>
        <begin position="1" status="less than"/>
        <end position="331"/>
    </location>
</feature>
<feature type="domain" description="Pyruvate carboxyltransferase" evidence="2">
    <location>
        <begin position="1" status="less than"/>
        <end position="80"/>
    </location>
</feature>
<feature type="region of interest" description="Regulatory domain" evidence="1">
    <location>
        <begin position="205"/>
        <end position="331"/>
    </location>
</feature>
<feature type="binding site" evidence="1">
    <location>
        <position position="15"/>
    </location>
    <ligand>
        <name>Mn(2+)</name>
        <dbReference type="ChEBI" id="CHEBI:29035"/>
    </ligand>
</feature>
<feature type="binding site" evidence="1">
    <location>
        <position position="17"/>
    </location>
    <ligand>
        <name>Mn(2+)</name>
        <dbReference type="ChEBI" id="CHEBI:29035"/>
    </ligand>
</feature>
<feature type="binding site" evidence="1">
    <location>
        <position position="51"/>
    </location>
    <ligand>
        <name>Mn(2+)</name>
        <dbReference type="ChEBI" id="CHEBI:29035"/>
    </ligand>
</feature>
<feature type="non-terminal residue">
    <location>
        <position position="1"/>
    </location>
</feature>
<evidence type="ECO:0000250" key="1">
    <source>
        <dbReference type="UniProtKB" id="Q9JZG1"/>
    </source>
</evidence>
<evidence type="ECO:0000255" key="2">
    <source>
        <dbReference type="PROSITE-ProRule" id="PRU01151"/>
    </source>
</evidence>
<evidence type="ECO:0000305" key="3"/>
<evidence type="ECO:0000312" key="4">
    <source>
        <dbReference type="EMBL" id="AAB01162.1"/>
    </source>
</evidence>
<sequence length="331" mass="36083">RDEVVRGRDVVISTHTHDDLGMATANALAGVENGAGQIECTINGIGERAGNCALEEVVMALYVRRDWYKAYTRINTREIYRVSRLVERYTGMPVPPNKAIVGDNAFAHESGIHQDGVIKHRATYEIMDAELIGRRPAVLVLGKHSGRAAFKKALEDLGYKDLSEEEVKKLFARFKEIAEKKGPLSAEELQALVESEREPTSHFFQLEHVQFFSGSGLLPTATVKVKTPDGERLATHTGDGPVDAVYKAIQEAIGLRPELELYRVEAITGSTEALGQVTVRLRLGELQAVGVGVSPDIIEASALAFLDAAGKLASGRATRHPPSIEEVHRGV</sequence>
<organism>
    <name type="scientific">Thermus thermophilus</name>
    <dbReference type="NCBI Taxonomy" id="274"/>
    <lineage>
        <taxon>Bacteria</taxon>
        <taxon>Thermotogati</taxon>
        <taxon>Deinococcota</taxon>
        <taxon>Deinococci</taxon>
        <taxon>Thermales</taxon>
        <taxon>Thermaceae</taxon>
        <taxon>Thermus</taxon>
    </lineage>
</organism>
<proteinExistence type="evidence at transcript level"/>
<accession>Q56216</accession>
<comment type="function">
    <text evidence="1">Catalyzes the condensation of the acetyl group of acetyl-CoA with 3-methyl-2-oxobutanoate (2-oxoisovalerate) to form 3-carboxy-3-hydroxy-4-methylpentanoate (2-isopropylmalate).</text>
</comment>
<comment type="catalytic activity">
    <reaction evidence="1">
        <text>3-methyl-2-oxobutanoate + acetyl-CoA + H2O = (2S)-2-isopropylmalate + CoA + H(+)</text>
        <dbReference type="Rhea" id="RHEA:21524"/>
        <dbReference type="ChEBI" id="CHEBI:1178"/>
        <dbReference type="ChEBI" id="CHEBI:11851"/>
        <dbReference type="ChEBI" id="CHEBI:15377"/>
        <dbReference type="ChEBI" id="CHEBI:15378"/>
        <dbReference type="ChEBI" id="CHEBI:57287"/>
        <dbReference type="ChEBI" id="CHEBI:57288"/>
        <dbReference type="EC" id="2.3.3.13"/>
    </reaction>
</comment>
<comment type="cofactor">
    <cofactor evidence="1">
        <name>Mn(2+)</name>
        <dbReference type="ChEBI" id="CHEBI:29035"/>
    </cofactor>
</comment>
<comment type="pathway">
    <text evidence="1">Amino-acid biosynthesis; L-leucine biosynthesis; L-leucine from 3-methyl-2-oxobutanoate: step 1/4.</text>
</comment>
<comment type="subunit">
    <text evidence="1">Homotetramer.</text>
</comment>
<comment type="subcellular location">
    <subcellularLocation>
        <location evidence="1">Cytoplasm</location>
    </subcellularLocation>
</comment>
<comment type="similarity">
    <text evidence="3">Belongs to the alpha-IPM synthase/homocitrate synthase family. LeuA type 1 subfamily.</text>
</comment>
<name>LEU1_THETH</name>
<protein>
    <recommendedName>
        <fullName evidence="1">2-isopropylmalate synthase</fullName>
        <ecNumber evidence="1">2.3.3.13</ecNumber>
    </recommendedName>
    <alternativeName>
        <fullName evidence="1">Alpha-IPM synthase</fullName>
    </alternativeName>
    <alternativeName>
        <fullName evidence="1">Alpha-isopropylmalate synthase</fullName>
    </alternativeName>
</protein>
<dbReference type="EC" id="2.3.3.13" evidence="1"/>
<dbReference type="EMBL" id="U52907">
    <property type="protein sequence ID" value="AAB01162.1"/>
    <property type="molecule type" value="mRNA"/>
</dbReference>
<dbReference type="SMR" id="Q56216"/>
<dbReference type="UniPathway" id="UPA00048">
    <property type="reaction ID" value="UER00070"/>
</dbReference>
<dbReference type="GO" id="GO:0005737">
    <property type="term" value="C:cytoplasm"/>
    <property type="evidence" value="ECO:0007669"/>
    <property type="project" value="UniProtKB-SubCell"/>
</dbReference>
<dbReference type="GO" id="GO:0003852">
    <property type="term" value="F:2-isopropylmalate synthase activity"/>
    <property type="evidence" value="ECO:0007669"/>
    <property type="project" value="UniProtKB-EC"/>
</dbReference>
<dbReference type="GO" id="GO:0046872">
    <property type="term" value="F:metal ion binding"/>
    <property type="evidence" value="ECO:0007669"/>
    <property type="project" value="UniProtKB-KW"/>
</dbReference>
<dbReference type="GO" id="GO:0009098">
    <property type="term" value="P:L-leucine biosynthetic process"/>
    <property type="evidence" value="ECO:0007669"/>
    <property type="project" value="UniProtKB-UniPathway"/>
</dbReference>
<dbReference type="FunFam" id="1.10.238.260:FF:000001">
    <property type="entry name" value="2-isopropylmalate synthase"/>
    <property type="match status" value="1"/>
</dbReference>
<dbReference type="Gene3D" id="1.10.238.260">
    <property type="match status" value="1"/>
</dbReference>
<dbReference type="Gene3D" id="3.30.160.270">
    <property type="match status" value="1"/>
</dbReference>
<dbReference type="Gene3D" id="3.20.20.70">
    <property type="entry name" value="Aldolase class I"/>
    <property type="match status" value="1"/>
</dbReference>
<dbReference type="InterPro" id="IPR050073">
    <property type="entry name" value="2-IPM_HCS-like"/>
</dbReference>
<dbReference type="InterPro" id="IPR013709">
    <property type="entry name" value="2-isopropylmalate_synth_dimer"/>
</dbReference>
<dbReference type="InterPro" id="IPR002034">
    <property type="entry name" value="AIPM/Hcit_synth_CS"/>
</dbReference>
<dbReference type="InterPro" id="IPR013785">
    <property type="entry name" value="Aldolase_TIM"/>
</dbReference>
<dbReference type="InterPro" id="IPR054691">
    <property type="entry name" value="LeuA/HCS_post-cat"/>
</dbReference>
<dbReference type="InterPro" id="IPR036230">
    <property type="entry name" value="LeuA_allosteric_dom_sf"/>
</dbReference>
<dbReference type="InterPro" id="IPR000891">
    <property type="entry name" value="PYR_CT"/>
</dbReference>
<dbReference type="PANTHER" id="PTHR10277:SF9">
    <property type="entry name" value="2-ISOPROPYLMALATE SYNTHASE 1, CHLOROPLASTIC-RELATED"/>
    <property type="match status" value="1"/>
</dbReference>
<dbReference type="PANTHER" id="PTHR10277">
    <property type="entry name" value="HOMOCITRATE SYNTHASE-RELATED"/>
    <property type="match status" value="1"/>
</dbReference>
<dbReference type="Pfam" id="PF22617">
    <property type="entry name" value="HCS_D2"/>
    <property type="match status" value="1"/>
</dbReference>
<dbReference type="Pfam" id="PF00682">
    <property type="entry name" value="HMGL-like"/>
    <property type="match status" value="1"/>
</dbReference>
<dbReference type="Pfam" id="PF08502">
    <property type="entry name" value="LeuA_dimer"/>
    <property type="match status" value="1"/>
</dbReference>
<dbReference type="SMART" id="SM00917">
    <property type="entry name" value="LeuA_dimer"/>
    <property type="match status" value="1"/>
</dbReference>
<dbReference type="SUPFAM" id="SSF110921">
    <property type="entry name" value="2-isopropylmalate synthase LeuA, allosteric (dimerisation) domain"/>
    <property type="match status" value="1"/>
</dbReference>
<dbReference type="SUPFAM" id="SSF51569">
    <property type="entry name" value="Aldolase"/>
    <property type="match status" value="1"/>
</dbReference>
<dbReference type="PROSITE" id="PS00816">
    <property type="entry name" value="AIPM_HOMOCIT_SYNTH_2"/>
    <property type="match status" value="1"/>
</dbReference>
<dbReference type="PROSITE" id="PS50991">
    <property type="entry name" value="PYR_CT"/>
    <property type="match status" value="1"/>
</dbReference>